<keyword id="KW-0025">Alternative splicing</keyword>
<keyword id="KW-0963">Cytoplasm</keyword>
<keyword id="KW-0539">Nucleus</keyword>
<keyword id="KW-1185">Reference proteome</keyword>
<keyword id="KW-0677">Repeat</keyword>
<keyword id="KW-0833">Ubl conjugation pathway</keyword>
<keyword id="KW-0853">WD repeat</keyword>
<keyword id="KW-0879">Wnt signaling pathway</keyword>
<dbReference type="EMBL" id="CABZ01001946">
    <property type="status" value="NOT_ANNOTATED_CDS"/>
    <property type="molecule type" value="Genomic_DNA"/>
</dbReference>
<dbReference type="EMBL" id="LO018288">
    <property type="status" value="NOT_ANNOTATED_CDS"/>
    <property type="molecule type" value="Genomic_DNA"/>
</dbReference>
<dbReference type="EMBL" id="BC045356">
    <property type="protein sequence ID" value="AAH45356.1"/>
    <property type="molecule type" value="mRNA"/>
</dbReference>
<dbReference type="RefSeq" id="NP_958467.1">
    <molecule id="A0A2R8QFQ6-2"/>
    <property type="nucleotide sequence ID" value="NM_201310.1"/>
</dbReference>
<dbReference type="RefSeq" id="XP_005173126.1">
    <molecule id="A0A2R8QFQ6-1"/>
    <property type="nucleotide sequence ID" value="XM_005173069.5"/>
</dbReference>
<dbReference type="SMR" id="A0A2R8QFQ6"/>
<dbReference type="FunCoup" id="A0A2R8QFQ6">
    <property type="interactions" value="1864"/>
</dbReference>
<dbReference type="STRING" id="7955.ENSDARP00000151798"/>
<dbReference type="PaxDb" id="7955-ENSDARP00000037531"/>
<dbReference type="Ensembl" id="ENSDART00000188082">
    <molecule id="A0A2R8QFQ6-1"/>
    <property type="protein sequence ID" value="ENSDARP00000151798"/>
    <property type="gene ID" value="ENSDARG00000104806"/>
</dbReference>
<dbReference type="GeneID" id="334373"/>
<dbReference type="KEGG" id="dre:334373"/>
<dbReference type="AGR" id="ZFIN:ZDB-GENE-030131-6305"/>
<dbReference type="CTD" id="334373"/>
<dbReference type="ZFIN" id="ZDB-GENE-030131-6305">
    <property type="gene designation" value="fbxw11a"/>
</dbReference>
<dbReference type="eggNOG" id="KOG0281">
    <property type="taxonomic scope" value="Eukaryota"/>
</dbReference>
<dbReference type="HOGENOM" id="CLU_000288_103_6_1"/>
<dbReference type="InParanoid" id="A0A2R8QFQ6"/>
<dbReference type="OMA" id="LQCFEKW"/>
<dbReference type="OrthoDB" id="19711at2759"/>
<dbReference type="TreeFam" id="TF105679"/>
<dbReference type="UniPathway" id="UPA00143"/>
<dbReference type="PRO" id="PR:A0A2R8QFQ6"/>
<dbReference type="Proteomes" id="UP000000437">
    <property type="component" value="Chromosome 14"/>
</dbReference>
<dbReference type="ExpressionAtlas" id="A0A2R8QFQ6">
    <property type="expression patterns" value="baseline and differential"/>
</dbReference>
<dbReference type="GO" id="GO:0005737">
    <property type="term" value="C:cytoplasm"/>
    <property type="evidence" value="ECO:0007669"/>
    <property type="project" value="UniProtKB-SubCell"/>
</dbReference>
<dbReference type="GO" id="GO:0005634">
    <property type="term" value="C:nucleus"/>
    <property type="evidence" value="ECO:0007669"/>
    <property type="project" value="UniProtKB-SubCell"/>
</dbReference>
<dbReference type="GO" id="GO:0032040">
    <property type="term" value="C:small-subunit processome"/>
    <property type="evidence" value="ECO:0000318"/>
    <property type="project" value="GO_Central"/>
</dbReference>
<dbReference type="GO" id="GO:0046983">
    <property type="term" value="F:protein dimerization activity"/>
    <property type="evidence" value="ECO:0007669"/>
    <property type="project" value="InterPro"/>
</dbReference>
<dbReference type="GO" id="GO:0030515">
    <property type="term" value="F:snoRNA binding"/>
    <property type="evidence" value="ECO:0000318"/>
    <property type="project" value="GO_Central"/>
</dbReference>
<dbReference type="GO" id="GO:0016567">
    <property type="term" value="P:protein ubiquitination"/>
    <property type="evidence" value="ECO:0007669"/>
    <property type="project" value="UniProtKB-UniPathway"/>
</dbReference>
<dbReference type="GO" id="GO:0002040">
    <property type="term" value="P:sprouting angiogenesis"/>
    <property type="evidence" value="ECO:0000316"/>
    <property type="project" value="ZFIN"/>
</dbReference>
<dbReference type="GO" id="GO:0016055">
    <property type="term" value="P:Wnt signaling pathway"/>
    <property type="evidence" value="ECO:0007669"/>
    <property type="project" value="UniProtKB-KW"/>
</dbReference>
<dbReference type="CDD" id="cd22183">
    <property type="entry name" value="F-box_FBXW1B"/>
    <property type="match status" value="1"/>
</dbReference>
<dbReference type="CDD" id="cd00200">
    <property type="entry name" value="WD40"/>
    <property type="match status" value="1"/>
</dbReference>
<dbReference type="FunFam" id="1.20.1280.50:FF:000001">
    <property type="entry name" value="F-box/WD repeat-containing protein 11 isoform X2"/>
    <property type="match status" value="1"/>
</dbReference>
<dbReference type="FunFam" id="2.130.10.10:FF:000004">
    <property type="entry name" value="F-box/WD repeat-containing protein 11 isoform X2"/>
    <property type="match status" value="1"/>
</dbReference>
<dbReference type="Gene3D" id="1.20.1280.50">
    <property type="match status" value="1"/>
</dbReference>
<dbReference type="Gene3D" id="6.10.250.1840">
    <property type="match status" value="1"/>
</dbReference>
<dbReference type="Gene3D" id="2.130.10.10">
    <property type="entry name" value="YVTN repeat-like/Quinoprotein amine dehydrogenase"/>
    <property type="match status" value="1"/>
</dbReference>
<dbReference type="InterPro" id="IPR021977">
    <property type="entry name" value="Beta-TrCP_D"/>
</dbReference>
<dbReference type="InterPro" id="IPR036047">
    <property type="entry name" value="F-box-like_dom_sf"/>
</dbReference>
<dbReference type="InterPro" id="IPR001810">
    <property type="entry name" value="F-box_dom"/>
</dbReference>
<dbReference type="InterPro" id="IPR020472">
    <property type="entry name" value="G-protein_beta_WD-40_rep"/>
</dbReference>
<dbReference type="InterPro" id="IPR050995">
    <property type="entry name" value="WD-F-box_domain-protein"/>
</dbReference>
<dbReference type="InterPro" id="IPR015943">
    <property type="entry name" value="WD40/YVTN_repeat-like_dom_sf"/>
</dbReference>
<dbReference type="InterPro" id="IPR019775">
    <property type="entry name" value="WD40_repeat_CS"/>
</dbReference>
<dbReference type="InterPro" id="IPR036322">
    <property type="entry name" value="WD40_repeat_dom_sf"/>
</dbReference>
<dbReference type="InterPro" id="IPR001680">
    <property type="entry name" value="WD40_rpt"/>
</dbReference>
<dbReference type="PANTHER" id="PTHR14604:SF6">
    <property type="entry name" value="F-BOX AND WD REPEAT DOMAIN-CONTAINING 11-B"/>
    <property type="match status" value="1"/>
</dbReference>
<dbReference type="PANTHER" id="PTHR14604">
    <property type="entry name" value="WD40 REPEAT PF20"/>
    <property type="match status" value="1"/>
</dbReference>
<dbReference type="Pfam" id="PF12125">
    <property type="entry name" value="Beta-TrCP_D"/>
    <property type="match status" value="1"/>
</dbReference>
<dbReference type="Pfam" id="PF12937">
    <property type="entry name" value="F-box-like"/>
    <property type="match status" value="1"/>
</dbReference>
<dbReference type="Pfam" id="PF00400">
    <property type="entry name" value="WD40"/>
    <property type="match status" value="7"/>
</dbReference>
<dbReference type="PRINTS" id="PR00320">
    <property type="entry name" value="GPROTEINBRPT"/>
</dbReference>
<dbReference type="SMART" id="SM01028">
    <property type="entry name" value="Beta-TrCP_D"/>
    <property type="match status" value="1"/>
</dbReference>
<dbReference type="SMART" id="SM00256">
    <property type="entry name" value="FBOX"/>
    <property type="match status" value="1"/>
</dbReference>
<dbReference type="SMART" id="SM00320">
    <property type="entry name" value="WD40"/>
    <property type="match status" value="7"/>
</dbReference>
<dbReference type="SUPFAM" id="SSF81383">
    <property type="entry name" value="F-box domain"/>
    <property type="match status" value="1"/>
</dbReference>
<dbReference type="SUPFAM" id="SSF50978">
    <property type="entry name" value="WD40 repeat-like"/>
    <property type="match status" value="1"/>
</dbReference>
<dbReference type="PROSITE" id="PS50181">
    <property type="entry name" value="FBOX"/>
    <property type="match status" value="1"/>
</dbReference>
<dbReference type="PROSITE" id="PS00678">
    <property type="entry name" value="WD_REPEATS_1"/>
    <property type="match status" value="5"/>
</dbReference>
<dbReference type="PROSITE" id="PS50082">
    <property type="entry name" value="WD_REPEATS_2"/>
    <property type="match status" value="7"/>
</dbReference>
<dbReference type="PROSITE" id="PS50294">
    <property type="entry name" value="WD_REPEATS_REGION"/>
    <property type="match status" value="1"/>
</dbReference>
<sequence length="562" mass="64108">MDPDKEDKTLELMCSLPRSVWLGCSSVAESLCALRCLQSLPSSRAHNQNMTGMESQINTDEVSPKKTTVFKLGNGSLAGSRKRPSQGSFDKEKDLCIQLFDQWSESDQVEFVEHLIARMCHYQHGHINSYLKPMLQRDFITALPARGLDHIAENILSFLDARSLCSAELVCREWQRVISDGMLWKKLIERMVRTDPLWKGLSERHQWEKYLFKNRTNEVPPNSYYHSLYPKIIQDIETIEANWRCGRHNLQRIQCRSENSKGVYCLQYDDDKIISGLRDNSIKIWDKQSLECLKVLTGHTGSVLCLQYDERVIVTGSSDSTVRVWDVSSGEVLNTLIHHNEAVLHLRFCNGLMVTCSKDRSIAVWDMASATDISLRRVLVGHRAAVNVVDFDDKYIVSASGDRTIKVWSTSTCEFVRTLNGHKRGIACLQYRDRLVVSGSSDNTIRLWDIECGACLRVLEGHEELVRCIRFDNKRIVSGAYDGKIKVWDLQAALDPRAPASTLCLRTLVEHSGRVFRLQFDEFQIISSSHDDTILIWDFLNVSSNGQSDGRSPSRTYTYVSR</sequence>
<evidence type="ECO:0000250" key="1">
    <source>
        <dbReference type="UniProtKB" id="Q5SRY7"/>
    </source>
</evidence>
<evidence type="ECO:0000250" key="2">
    <source>
        <dbReference type="UniProtKB" id="Q9UKB1"/>
    </source>
</evidence>
<evidence type="ECO:0000255" key="3">
    <source>
        <dbReference type="PROSITE-ProRule" id="PRU00080"/>
    </source>
</evidence>
<evidence type="ECO:0000255" key="4">
    <source>
        <dbReference type="PROSITE-ProRule" id="PRU00221"/>
    </source>
</evidence>
<evidence type="ECO:0000269" key="5">
    <source>
    </source>
</evidence>
<evidence type="ECO:0000303" key="6">
    <source ref="2"/>
</evidence>
<evidence type="ECO:0000305" key="7"/>
<evidence type="ECO:0000312" key="8">
    <source>
        <dbReference type="ZFIN" id="ZDB-GENE-030131-6305"/>
    </source>
</evidence>
<gene>
    <name evidence="8" type="primary">fbxw11a</name>
</gene>
<reference key="1">
    <citation type="journal article" date="2013" name="Nature">
        <title>The zebrafish reference genome sequence and its relationship to the human genome.</title>
        <authorList>
            <person name="Howe K."/>
            <person name="Clark M.D."/>
            <person name="Torroja C.F."/>
            <person name="Torrance J."/>
            <person name="Berthelot C."/>
            <person name="Muffato M."/>
            <person name="Collins J.E."/>
            <person name="Humphray S."/>
            <person name="McLaren K."/>
            <person name="Matthews L."/>
            <person name="McLaren S."/>
            <person name="Sealy I."/>
            <person name="Caccamo M."/>
            <person name="Churcher C."/>
            <person name="Scott C."/>
            <person name="Barrett J.C."/>
            <person name="Koch R."/>
            <person name="Rauch G.J."/>
            <person name="White S."/>
            <person name="Chow W."/>
            <person name="Kilian B."/>
            <person name="Quintais L.T."/>
            <person name="Guerra-Assuncao J.A."/>
            <person name="Zhou Y."/>
            <person name="Gu Y."/>
            <person name="Yen J."/>
            <person name="Vogel J.H."/>
            <person name="Eyre T."/>
            <person name="Redmond S."/>
            <person name="Banerjee R."/>
            <person name="Chi J."/>
            <person name="Fu B."/>
            <person name="Langley E."/>
            <person name="Maguire S.F."/>
            <person name="Laird G.K."/>
            <person name="Lloyd D."/>
            <person name="Kenyon E."/>
            <person name="Donaldson S."/>
            <person name="Sehra H."/>
            <person name="Almeida-King J."/>
            <person name="Loveland J."/>
            <person name="Trevanion S."/>
            <person name="Jones M."/>
            <person name="Quail M."/>
            <person name="Willey D."/>
            <person name="Hunt A."/>
            <person name="Burton J."/>
            <person name="Sims S."/>
            <person name="McLay K."/>
            <person name="Plumb B."/>
            <person name="Davis J."/>
            <person name="Clee C."/>
            <person name="Oliver K."/>
            <person name="Clark R."/>
            <person name="Riddle C."/>
            <person name="Elliot D."/>
            <person name="Threadgold G."/>
            <person name="Harden G."/>
            <person name="Ware D."/>
            <person name="Begum S."/>
            <person name="Mortimore B."/>
            <person name="Kerry G."/>
            <person name="Heath P."/>
            <person name="Phillimore B."/>
            <person name="Tracey A."/>
            <person name="Corby N."/>
            <person name="Dunn M."/>
            <person name="Johnson C."/>
            <person name="Wood J."/>
            <person name="Clark S."/>
            <person name="Pelan S."/>
            <person name="Griffiths G."/>
            <person name="Smith M."/>
            <person name="Glithero R."/>
            <person name="Howden P."/>
            <person name="Barker N."/>
            <person name="Lloyd C."/>
            <person name="Stevens C."/>
            <person name="Harley J."/>
            <person name="Holt K."/>
            <person name="Panagiotidis G."/>
            <person name="Lovell J."/>
            <person name="Beasley H."/>
            <person name="Henderson C."/>
            <person name="Gordon D."/>
            <person name="Auger K."/>
            <person name="Wright D."/>
            <person name="Collins J."/>
            <person name="Raisen C."/>
            <person name="Dyer L."/>
            <person name="Leung K."/>
            <person name="Robertson L."/>
            <person name="Ambridge K."/>
            <person name="Leongamornlert D."/>
            <person name="McGuire S."/>
            <person name="Gilderthorp R."/>
            <person name="Griffiths C."/>
            <person name="Manthravadi D."/>
            <person name="Nichol S."/>
            <person name="Barker G."/>
            <person name="Whitehead S."/>
            <person name="Kay M."/>
            <person name="Brown J."/>
            <person name="Murnane C."/>
            <person name="Gray E."/>
            <person name="Humphries M."/>
            <person name="Sycamore N."/>
            <person name="Barker D."/>
            <person name="Saunders D."/>
            <person name="Wallis J."/>
            <person name="Babbage A."/>
            <person name="Hammond S."/>
            <person name="Mashreghi-Mohammadi M."/>
            <person name="Barr L."/>
            <person name="Martin S."/>
            <person name="Wray P."/>
            <person name="Ellington A."/>
            <person name="Matthews N."/>
            <person name="Ellwood M."/>
            <person name="Woodmansey R."/>
            <person name="Clark G."/>
            <person name="Cooper J."/>
            <person name="Tromans A."/>
            <person name="Grafham D."/>
            <person name="Skuce C."/>
            <person name="Pandian R."/>
            <person name="Andrews R."/>
            <person name="Harrison E."/>
            <person name="Kimberley A."/>
            <person name="Garnett J."/>
            <person name="Fosker N."/>
            <person name="Hall R."/>
            <person name="Garner P."/>
            <person name="Kelly D."/>
            <person name="Bird C."/>
            <person name="Palmer S."/>
            <person name="Gehring I."/>
            <person name="Berger A."/>
            <person name="Dooley C.M."/>
            <person name="Ersan-Urun Z."/>
            <person name="Eser C."/>
            <person name="Geiger H."/>
            <person name="Geisler M."/>
            <person name="Karotki L."/>
            <person name="Kirn A."/>
            <person name="Konantz J."/>
            <person name="Konantz M."/>
            <person name="Oberlander M."/>
            <person name="Rudolph-Geiger S."/>
            <person name="Teucke M."/>
            <person name="Lanz C."/>
            <person name="Raddatz G."/>
            <person name="Osoegawa K."/>
            <person name="Zhu B."/>
            <person name="Rapp A."/>
            <person name="Widaa S."/>
            <person name="Langford C."/>
            <person name="Yang F."/>
            <person name="Schuster S.C."/>
            <person name="Carter N.P."/>
            <person name="Harrow J."/>
            <person name="Ning Z."/>
            <person name="Herrero J."/>
            <person name="Searle S.M."/>
            <person name="Enright A."/>
            <person name="Geisler R."/>
            <person name="Plasterk R.H."/>
            <person name="Lee C."/>
            <person name="Westerfield M."/>
            <person name="de Jong P.J."/>
            <person name="Zon L.I."/>
            <person name="Postlethwait J.H."/>
            <person name="Nusslein-Volhard C."/>
            <person name="Hubbard T.J."/>
            <person name="Roest Crollius H."/>
            <person name="Rogers J."/>
            <person name="Stemple D.L."/>
        </authorList>
    </citation>
    <scope>NUCLEOTIDE SEQUENCE [LARGE SCALE GENOMIC DNA]</scope>
    <source>
        <strain>Tuebingen</strain>
    </source>
</reference>
<reference key="2">
    <citation type="submission" date="2003-01" db="EMBL/GenBank/DDBJ databases">
        <authorList>
            <consortium name="NIH - Zebrafish Gene Collection (ZGC) project"/>
        </authorList>
    </citation>
    <scope>NUCLEOTIDE SEQUENCE [LARGE SCALE MRNA] (ISOFORM 2)</scope>
</reference>
<reference key="3">
    <citation type="journal article" date="2019" name="Am. J. Hum. Genet.">
        <title>De novo missense variants in FBXW11 cause diverse developmental phenotypes including brain, eye, and digit anomalies.</title>
        <authorList>
            <person name="Holt R.J."/>
            <person name="Young R.M."/>
            <person name="Crespo B."/>
            <person name="Ceroni F."/>
            <person name="Curry C.J."/>
            <person name="Bellacchio E."/>
            <person name="Bax D.A."/>
            <person name="Ciolfi A."/>
            <person name="Simon M."/>
            <person name="Fagerberg C.R."/>
            <person name="van Binsbergen E."/>
            <person name="De Luca A."/>
            <person name="Memo L."/>
            <person name="Dobyns W.B."/>
            <person name="Mohammed A.A."/>
            <person name="Clokie S.J.H."/>
            <person name="Zazo Seco C."/>
            <person name="Jiang Y.H."/>
            <person name="Soerensen K.P."/>
            <person name="Andersen H."/>
            <person name="Sullivan J."/>
            <person name="Powis Z."/>
            <person name="Chassevent A."/>
            <person name="Smith-Hicks C."/>
            <person name="Petrovski S."/>
            <person name="Antoniadi T."/>
            <person name="Shashi V."/>
            <person name="Gelb B.D."/>
            <person name="Wilson S.W."/>
            <person name="Gerrelli D."/>
            <person name="Tartaglia M."/>
            <person name="Chassaing N."/>
            <person name="Calvas P."/>
            <person name="Ragge N.K."/>
        </authorList>
    </citation>
    <scope>FUNCTION</scope>
    <scope>DEVELOPMENTAL STAGE</scope>
    <scope>DISRUPTION PHENOTYPE</scope>
</reference>
<protein>
    <recommendedName>
        <fullName evidence="7">F-box and WD repeat domain-containing 11-A</fullName>
    </recommendedName>
</protein>
<comment type="function">
    <text evidence="2 5">Substrate recognition component of a SCF (SKP1-CUL1-F-box protein) E3 ubiquitin-protein ligase complex which mediates the ubiquitination and subsequent proteasomal degradation of target proteins (By similarity). Probably recognizes and binds to phosphorylated target proteins: the interaction with substrates requires the phosphorylation of the two serine residues in the substrates' destruction motif D-S-G-X(2,3,4)-S (By similarity). SCF(FBXW11) mediates the ubiquitination of phosphorylated CTNNB1 and participates in Wnt signaling regulation (By similarity). Participates in Wnt signaling regulation, and plays a role in eye and jaw development (PubMed:31402090). SCF(FBXW11) plays a key role in NF-kappa-B activation by mediating ubiquitination of phosphorylated NFKBIA, leading to its degradation by the proteasome, thereby allowing the associated NF-kappa-B complex to translocate into the nucleus and to activate transcription (By similarity).</text>
</comment>
<comment type="pathway">
    <text evidence="2">Protein modification; protein ubiquitination.</text>
</comment>
<comment type="subunit">
    <text evidence="2">Self-associates. Component of the SCF(FBXW11) complex.</text>
</comment>
<comment type="subcellular location">
    <subcellularLocation>
        <location evidence="1">Cytoplasm</location>
    </subcellularLocation>
    <subcellularLocation>
        <location evidence="1">Nucleus</location>
    </subcellularLocation>
</comment>
<comment type="alternative products">
    <event type="alternative splicing"/>
    <isoform>
        <id>A0A2R8QFQ6-1</id>
        <name>1</name>
        <sequence type="displayed"/>
    </isoform>
    <isoform>
        <id>A0A2R8QFQ6-2</id>
        <name>2</name>
        <sequence type="described" ref="VSP_061015"/>
    </isoform>
</comment>
<comment type="developmental stage">
    <text evidence="5">At 4 days post fertilization (dpf), it is expressed at low levels in the retina and brain, and at higher levels in the jaw mesenchyme.</text>
</comment>
<comment type="domain">
    <text evidence="2">The N-terminal D domain mediates homodimerization.</text>
</comment>
<comment type="disruption phenotype">
    <text evidence="5">Knockdown of both fbxw11a and fbxw11b results in abnormally developed pectoral fins and heart edema by day 3 post-fertilization (3 dpf). At 5 dpf, knocked-down embryos show periocular edema, small and misshapen eyes, and abnormal development of the jaw.</text>
</comment>
<proteinExistence type="evidence at transcript level"/>
<feature type="chain" id="PRO_0000452533" description="F-box and WD repeat domain-containing 11-A">
    <location>
        <begin position="1"/>
        <end position="562"/>
    </location>
</feature>
<feature type="domain" description="F-box" evidence="3">
    <location>
        <begin position="149"/>
        <end position="187"/>
    </location>
</feature>
<feature type="repeat" description="WD 1" evidence="4">
    <location>
        <begin position="256"/>
        <end position="295"/>
    </location>
</feature>
<feature type="repeat" description="WD 2" evidence="4">
    <location>
        <begin position="296"/>
        <end position="335"/>
    </location>
</feature>
<feature type="repeat" description="WD 3" evidence="4">
    <location>
        <begin position="336"/>
        <end position="375"/>
    </location>
</feature>
<feature type="repeat" description="WD 4" evidence="4">
    <location>
        <begin position="379"/>
        <end position="418"/>
    </location>
</feature>
<feature type="repeat" description="WD 5" evidence="4">
    <location>
        <begin position="419"/>
        <end position="458"/>
    </location>
</feature>
<feature type="repeat" description="WD 6" evidence="4">
    <location>
        <begin position="459"/>
        <end position="491"/>
    </location>
</feature>
<feature type="repeat" description="WD 7" evidence="4">
    <location>
        <begin position="508"/>
        <end position="538"/>
    </location>
</feature>
<feature type="region of interest" description="Homodimerization domain D" evidence="2">
    <location>
        <begin position="87"/>
        <end position="136"/>
    </location>
</feature>
<feature type="splice variant" id="VSP_061015" description="In isoform 2." evidence="6">
    <location>
        <begin position="14"/>
        <end position="48"/>
    </location>
</feature>
<accession>A0A2R8QFQ6</accession>
<accession>Q7ZVZ1</accession>
<name>FB11A_DANRE</name>
<organism>
    <name type="scientific">Danio rerio</name>
    <name type="common">Zebrafish</name>
    <name type="synonym">Brachydanio rerio</name>
    <dbReference type="NCBI Taxonomy" id="7955"/>
    <lineage>
        <taxon>Eukaryota</taxon>
        <taxon>Metazoa</taxon>
        <taxon>Chordata</taxon>
        <taxon>Craniata</taxon>
        <taxon>Vertebrata</taxon>
        <taxon>Euteleostomi</taxon>
        <taxon>Actinopterygii</taxon>
        <taxon>Neopterygii</taxon>
        <taxon>Teleostei</taxon>
        <taxon>Ostariophysi</taxon>
        <taxon>Cypriniformes</taxon>
        <taxon>Danionidae</taxon>
        <taxon>Danioninae</taxon>
        <taxon>Danio</taxon>
    </lineage>
</organism>